<gene>
    <name evidence="5" type="primary">bbsB</name>
</gene>
<proteinExistence type="evidence at protein level"/>
<comment type="function">
    <text evidence="4">Component of the BbsAB thiolase complex, which catalyzes the thiolytic cleavage of (S)-2-benzoylsuccinyl-CoA to succinyl-CoA and benzoyl-CoA, the final step of anaerobic toluene metabolism.</text>
</comment>
<comment type="catalytic activity">
    <reaction evidence="4">
        <text>(S)-2-benzoylsuccinyl-CoA + CoA = benzoyl-CoA + succinyl-CoA</text>
        <dbReference type="Rhea" id="RHEA:74147"/>
        <dbReference type="ChEBI" id="CHEBI:57287"/>
        <dbReference type="ChEBI" id="CHEBI:57292"/>
        <dbReference type="ChEBI" id="CHEBI:57369"/>
        <dbReference type="ChEBI" id="CHEBI:189060"/>
        <dbReference type="EC" id="2.3.1.310"/>
    </reaction>
    <physiologicalReaction direction="left-to-right" evidence="9">
        <dbReference type="Rhea" id="RHEA:74148"/>
    </physiologicalReaction>
</comment>
<comment type="biophysicochemical properties">
    <phDependence>
        <text evidence="4">Optimum pH is 6.4 (for benzoylsuccinyl-CoA formation).</text>
    </phDependence>
</comment>
<comment type="pathway">
    <text evidence="4 8">Xenobiotic degradation; toluene degradation.</text>
</comment>
<comment type="subunit">
    <text evidence="4">Heterotetramer composed of two BbsA subunits and two BbsB subunits (PubMed:35313080). BbsB forms homodimeric subcomplexes (PubMed:35313080). Both BbsA and BbsB are essential for enzymatic activity (PubMed:35313080).</text>
</comment>
<comment type="induction">
    <text evidence="3">Induced by toluene.</text>
</comment>
<comment type="similarity">
    <text evidence="7">Belongs to the thiolase-like superfamily. Thiolase family.</text>
</comment>
<evidence type="ECO:0000250" key="1">
    <source>
        <dbReference type="UniProtKB" id="P42765"/>
    </source>
</evidence>
<evidence type="ECO:0000250" key="2">
    <source>
        <dbReference type="UniProtKB" id="Q39VG1"/>
    </source>
</evidence>
<evidence type="ECO:0000269" key="3">
    <source>
    </source>
</evidence>
<evidence type="ECO:0000269" key="4">
    <source>
    </source>
</evidence>
<evidence type="ECO:0000303" key="5">
    <source>
    </source>
</evidence>
<evidence type="ECO:0000303" key="6">
    <source>
    </source>
</evidence>
<evidence type="ECO:0000305" key="7"/>
<evidence type="ECO:0000305" key="8">
    <source>
    </source>
</evidence>
<evidence type="ECO:0000305" key="9">
    <source>
    </source>
</evidence>
<evidence type="ECO:0000312" key="10">
    <source>
        <dbReference type="EMBL" id="AAF89837.1"/>
    </source>
</evidence>
<feature type="chain" id="PRO_0000461311" description="Benzoylsuccinyl-CoA thiolase subunit BbsB">
    <location>
        <begin position="1"/>
        <end position="385"/>
    </location>
</feature>
<feature type="active site" description="Acyl-thioester intermediate" evidence="1">
    <location>
        <position position="84"/>
    </location>
</feature>
<feature type="binding site" evidence="2">
    <location>
        <position position="19"/>
    </location>
    <ligand>
        <name>CoA</name>
        <dbReference type="ChEBI" id="CHEBI:57287"/>
    </ligand>
</feature>
<feature type="binding site" evidence="2">
    <location>
        <position position="121"/>
    </location>
    <ligand>
        <name>CoA</name>
        <dbReference type="ChEBI" id="CHEBI:57287"/>
    </ligand>
</feature>
<feature type="binding site" evidence="2">
    <location>
        <position position="193"/>
    </location>
    <ligand>
        <name>CoA</name>
        <dbReference type="ChEBI" id="CHEBI:57287"/>
    </ligand>
</feature>
<feature type="binding site" evidence="2">
    <location>
        <position position="204"/>
    </location>
    <ligand>
        <name>CoA</name>
        <dbReference type="ChEBI" id="CHEBI:57287"/>
    </ligand>
</feature>
<feature type="binding site" evidence="2">
    <location>
        <position position="205"/>
    </location>
    <ligand>
        <name>CoA</name>
        <dbReference type="ChEBI" id="CHEBI:57287"/>
    </ligand>
</feature>
<feature type="site" description="Increases nucleophilicity of active site Cys" evidence="1">
    <location>
        <position position="330"/>
    </location>
</feature>
<feature type="sequence conflict" description="In Ref. 1; AA sequence." evidence="7" ref="1">
    <original>H</original>
    <variation>T</variation>
    <location>
        <position position="20"/>
    </location>
</feature>
<protein>
    <recommendedName>
        <fullName evidence="6">Benzoylsuccinyl-CoA thiolase subunit BbsB</fullName>
        <ecNumber evidence="4">2.3.1.310</ecNumber>
    </recommendedName>
</protein>
<name>BBSB_THAAR</name>
<sequence>MKLERKVYIAGVGETKFGRHEVDFDVLGRAAALEALKASNIDRPTMVQSAYVGNGTNGMVTGQTVLKDLGMCGHLPIINVESACSAGGMAIHLAVRDVALGLADVAIGIGCENHTLHMAQGTAFATAMSDIETVHGAVMTGKYAMRAQRYMYETGATAEDLAMITVKNRRHATNNPYAWFKGEISIEEVVNSRVVASPLTLQQCCGIADGAGAVVVCSEEMVKKLGIKKPIRVAGSVVRSGPYHNRPRDITGDDITEETAHQLYEESGIGPEDVNIVELHDAFTIAELLYYECLGLCPKGEGLKFLRDGNATHGGKCVVSPRGGMLSYGHPIGASGAAQIAASVKQMRNQCPGYQVEPVPRVAMTHVTGGGCRARNTRHARCTCW</sequence>
<reference evidence="10" key="1">
    <citation type="journal article" date="2000" name="J. Bacteriol.">
        <title>Anaerobic toluene catabolism of Thauera aromatica: the bbs operon codes for enzymes of beta-oxidation of the intermediate benzylsuccinate.</title>
        <authorList>
            <person name="Leuthner B."/>
            <person name="Heider J."/>
        </authorList>
    </citation>
    <scope>NUCLEOTIDE SEQUENCE [GENOMIC DNA]</scope>
    <scope>PROTEIN SEQUENCE OF 1-20</scope>
    <scope>PATHWAY</scope>
    <scope>INDUCTION</scope>
    <source>
        <strain>DSM 6984 / CIP 107765 / K172</strain>
    </source>
</reference>
<reference key="2">
    <citation type="journal article" date="2022" name="FEBS J.">
        <title>Finis tolueni: a new type of thiolase with an integrated Zn-finger subunit catalyzes the final step of anaerobic toluene metabolism.</title>
        <authorList>
            <person name="Weidenweber S."/>
            <person name="Schuhle K."/>
            <person name="Lippert M.L."/>
            <person name="Mock J."/>
            <person name="Seubert A."/>
            <person name="Demmer U."/>
            <person name="Ermler U."/>
            <person name="Heider J."/>
        </authorList>
    </citation>
    <scope>FUNCTION</scope>
    <scope>CATALYTIC ACTIVITY</scope>
    <scope>BIOPHYSICOCHEMICAL PROPERTIES</scope>
    <scope>PATHWAY</scope>
    <scope>SUBUNIT</scope>
</reference>
<organism>
    <name type="scientific">Thauera aromatica</name>
    <dbReference type="NCBI Taxonomy" id="59405"/>
    <lineage>
        <taxon>Bacteria</taxon>
        <taxon>Pseudomonadati</taxon>
        <taxon>Pseudomonadota</taxon>
        <taxon>Betaproteobacteria</taxon>
        <taxon>Rhodocyclales</taxon>
        <taxon>Zoogloeaceae</taxon>
        <taxon>Thauera</taxon>
    </lineage>
</organism>
<keyword id="KW-0012">Acyltransferase</keyword>
<keyword id="KW-0058">Aromatic hydrocarbons catabolism</keyword>
<keyword id="KW-0903">Direct protein sequencing</keyword>
<keyword id="KW-0808">Transferase</keyword>
<accession>Q9KJF3</accession>
<dbReference type="EC" id="2.3.1.310" evidence="4"/>
<dbReference type="EMBL" id="AF173961">
    <property type="protein sequence ID" value="AAF89837.1"/>
    <property type="molecule type" value="Genomic_DNA"/>
</dbReference>
<dbReference type="SMR" id="Q9KJF3"/>
<dbReference type="KEGG" id="ag:AAF89837"/>
<dbReference type="BioCyc" id="MetaCyc:MONOMER-691"/>
<dbReference type="UniPathway" id="UPA00273"/>
<dbReference type="GO" id="GO:0003988">
    <property type="term" value="F:acetyl-CoA C-acyltransferase activity"/>
    <property type="evidence" value="ECO:0007669"/>
    <property type="project" value="UniProtKB-ARBA"/>
</dbReference>
<dbReference type="GO" id="GO:0009056">
    <property type="term" value="P:catabolic process"/>
    <property type="evidence" value="ECO:0007669"/>
    <property type="project" value="UniProtKB-KW"/>
</dbReference>
<dbReference type="CDD" id="cd00829">
    <property type="entry name" value="SCP-x_thiolase"/>
    <property type="match status" value="1"/>
</dbReference>
<dbReference type="Gene3D" id="3.40.47.10">
    <property type="match status" value="1"/>
</dbReference>
<dbReference type="InterPro" id="IPR002155">
    <property type="entry name" value="Thiolase"/>
</dbReference>
<dbReference type="InterPro" id="IPR016039">
    <property type="entry name" value="Thiolase-like"/>
</dbReference>
<dbReference type="InterPro" id="IPR055140">
    <property type="entry name" value="Thiolase_C_2"/>
</dbReference>
<dbReference type="InterPro" id="IPR020616">
    <property type="entry name" value="Thiolase_N"/>
</dbReference>
<dbReference type="PANTHER" id="PTHR42870">
    <property type="entry name" value="ACETYL-COA C-ACETYLTRANSFERASE"/>
    <property type="match status" value="1"/>
</dbReference>
<dbReference type="PANTHER" id="PTHR42870:SF1">
    <property type="entry name" value="NON-SPECIFIC LIPID-TRANSFER PROTEIN-LIKE 2"/>
    <property type="match status" value="1"/>
</dbReference>
<dbReference type="Pfam" id="PF22691">
    <property type="entry name" value="Thiolase_C_1"/>
    <property type="match status" value="1"/>
</dbReference>
<dbReference type="Pfam" id="PF00108">
    <property type="entry name" value="Thiolase_N"/>
    <property type="match status" value="1"/>
</dbReference>
<dbReference type="PIRSF" id="PIRSF000429">
    <property type="entry name" value="Ac-CoA_Ac_transf"/>
    <property type="match status" value="1"/>
</dbReference>
<dbReference type="SUPFAM" id="SSF53901">
    <property type="entry name" value="Thiolase-like"/>
    <property type="match status" value="2"/>
</dbReference>